<feature type="chain" id="PRO_0000074421" description="Uncharacterized zinc protease ML0855">
    <location>
        <begin position="1"/>
        <end position="445"/>
    </location>
</feature>
<feature type="region of interest" description="Disordered" evidence="3">
    <location>
        <begin position="232"/>
        <end position="251"/>
    </location>
</feature>
<feature type="active site" description="Proton acceptor" evidence="2">
    <location>
        <position position="69"/>
    </location>
</feature>
<feature type="binding site" evidence="2">
    <location>
        <position position="66"/>
    </location>
    <ligand>
        <name>Zn(2+)</name>
        <dbReference type="ChEBI" id="CHEBI:29105"/>
    </ligand>
</feature>
<feature type="binding site" evidence="2">
    <location>
        <position position="70"/>
    </location>
    <ligand>
        <name>Zn(2+)</name>
        <dbReference type="ChEBI" id="CHEBI:29105"/>
    </ligand>
</feature>
<feature type="binding site" evidence="2">
    <location>
        <position position="146"/>
    </location>
    <ligand>
        <name>Zn(2+)</name>
        <dbReference type="ChEBI" id="CHEBI:29105"/>
    </ligand>
</feature>
<accession>O32965</accession>
<accession>Q9CCF7</accession>
<gene>
    <name type="ordered locus">ML0855</name>
    <name type="ORF">MLCB22.26c</name>
</gene>
<comment type="cofactor">
    <cofactor evidence="1">
        <name>Zn(2+)</name>
        <dbReference type="ChEBI" id="CHEBI:29105"/>
    </cofactor>
    <text evidence="1">Binds 1 zinc ion per subunit.</text>
</comment>
<comment type="similarity">
    <text evidence="4">Belongs to the peptidase M16 family.</text>
</comment>
<comment type="sequence caution" evidence="4">
    <conflict type="erroneous initiation">
        <sequence resource="EMBL-CDS" id="CAC31236"/>
    </conflict>
</comment>
<evidence type="ECO:0000250" key="1"/>
<evidence type="ECO:0000255" key="2">
    <source>
        <dbReference type="PROSITE-ProRule" id="PRU10096"/>
    </source>
</evidence>
<evidence type="ECO:0000256" key="3">
    <source>
        <dbReference type="SAM" id="MobiDB-lite"/>
    </source>
</evidence>
<evidence type="ECO:0000305" key="4"/>
<reference key="1">
    <citation type="journal article" date="2001" name="Nature">
        <title>Massive gene decay in the leprosy bacillus.</title>
        <authorList>
            <person name="Cole S.T."/>
            <person name="Eiglmeier K."/>
            <person name="Parkhill J."/>
            <person name="James K.D."/>
            <person name="Thomson N.R."/>
            <person name="Wheeler P.R."/>
            <person name="Honore N."/>
            <person name="Garnier T."/>
            <person name="Churcher C.M."/>
            <person name="Harris D.E."/>
            <person name="Mungall K.L."/>
            <person name="Basham D."/>
            <person name="Brown D."/>
            <person name="Chillingworth T."/>
            <person name="Connor R."/>
            <person name="Davies R.M."/>
            <person name="Devlin K."/>
            <person name="Duthoy S."/>
            <person name="Feltwell T."/>
            <person name="Fraser A."/>
            <person name="Hamlin N."/>
            <person name="Holroyd S."/>
            <person name="Hornsby T."/>
            <person name="Jagels K."/>
            <person name="Lacroix C."/>
            <person name="Maclean J."/>
            <person name="Moule S."/>
            <person name="Murphy L.D."/>
            <person name="Oliver K."/>
            <person name="Quail M.A."/>
            <person name="Rajandream M.A."/>
            <person name="Rutherford K.M."/>
            <person name="Rutter S."/>
            <person name="Seeger K."/>
            <person name="Simon S."/>
            <person name="Simmonds M."/>
            <person name="Skelton J."/>
            <person name="Squares R."/>
            <person name="Squares S."/>
            <person name="Stevens K."/>
            <person name="Taylor K."/>
            <person name="Whitehead S."/>
            <person name="Woodward J.R."/>
            <person name="Barrell B.G."/>
        </authorList>
    </citation>
    <scope>NUCLEOTIDE SEQUENCE [LARGE SCALE GENOMIC DNA]</scope>
    <source>
        <strain>TN</strain>
    </source>
</reference>
<protein>
    <recommendedName>
        <fullName>Uncharacterized zinc protease ML0855</fullName>
        <ecNumber>3.4.24.-</ecNumber>
    </recommendedName>
</protein>
<keyword id="KW-0378">Hydrolase</keyword>
<keyword id="KW-0479">Metal-binding</keyword>
<keyword id="KW-0482">Metalloprotease</keyword>
<keyword id="KW-0645">Protease</keyword>
<keyword id="KW-1185">Reference proteome</keyword>
<keyword id="KW-0862">Zinc</keyword>
<dbReference type="EC" id="3.4.24.-"/>
<dbReference type="EMBL" id="Z98741">
    <property type="protein sequence ID" value="CAB11391.1"/>
    <property type="molecule type" value="Genomic_DNA"/>
</dbReference>
<dbReference type="EMBL" id="AL583920">
    <property type="protein sequence ID" value="CAC31236.1"/>
    <property type="status" value="ALT_INIT"/>
    <property type="molecule type" value="Genomic_DNA"/>
</dbReference>
<dbReference type="PIR" id="A87016">
    <property type="entry name" value="A87016"/>
</dbReference>
<dbReference type="PIR" id="T44899">
    <property type="entry name" value="T44899"/>
</dbReference>
<dbReference type="SMR" id="O32965"/>
<dbReference type="STRING" id="272631.gene:17574681"/>
<dbReference type="KEGG" id="mle:ML0855"/>
<dbReference type="Leproma" id="ML0855"/>
<dbReference type="eggNOG" id="COG0612">
    <property type="taxonomic scope" value="Bacteria"/>
</dbReference>
<dbReference type="HOGENOM" id="CLU_009902_3_3_11"/>
<dbReference type="Proteomes" id="UP000000806">
    <property type="component" value="Chromosome"/>
</dbReference>
<dbReference type="GO" id="GO:0046872">
    <property type="term" value="F:metal ion binding"/>
    <property type="evidence" value="ECO:0007669"/>
    <property type="project" value="UniProtKB-KW"/>
</dbReference>
<dbReference type="GO" id="GO:0004222">
    <property type="term" value="F:metalloendopeptidase activity"/>
    <property type="evidence" value="ECO:0007669"/>
    <property type="project" value="InterPro"/>
</dbReference>
<dbReference type="GO" id="GO:0006508">
    <property type="term" value="P:proteolysis"/>
    <property type="evidence" value="ECO:0007669"/>
    <property type="project" value="UniProtKB-KW"/>
</dbReference>
<dbReference type="FunFam" id="3.30.830.10:FF:000008">
    <property type="entry name" value="Mitochondrial-processing peptidase subunit beta"/>
    <property type="match status" value="1"/>
</dbReference>
<dbReference type="Gene3D" id="3.30.830.10">
    <property type="entry name" value="Metalloenzyme, LuxS/M16 peptidase-like"/>
    <property type="match status" value="2"/>
</dbReference>
<dbReference type="InterPro" id="IPR011249">
    <property type="entry name" value="Metalloenz_LuxS/M16"/>
</dbReference>
<dbReference type="InterPro" id="IPR050361">
    <property type="entry name" value="MPP/UQCRC_Complex"/>
</dbReference>
<dbReference type="InterPro" id="IPR011765">
    <property type="entry name" value="Pept_M16_N"/>
</dbReference>
<dbReference type="InterPro" id="IPR001431">
    <property type="entry name" value="Pept_M16_Zn_BS"/>
</dbReference>
<dbReference type="InterPro" id="IPR007863">
    <property type="entry name" value="Peptidase_M16_C"/>
</dbReference>
<dbReference type="PANTHER" id="PTHR11851">
    <property type="entry name" value="METALLOPROTEASE"/>
    <property type="match status" value="1"/>
</dbReference>
<dbReference type="PANTHER" id="PTHR11851:SF49">
    <property type="entry name" value="MITOCHONDRIAL-PROCESSING PEPTIDASE SUBUNIT ALPHA"/>
    <property type="match status" value="1"/>
</dbReference>
<dbReference type="Pfam" id="PF00675">
    <property type="entry name" value="Peptidase_M16"/>
    <property type="match status" value="1"/>
</dbReference>
<dbReference type="Pfam" id="PF05193">
    <property type="entry name" value="Peptidase_M16_C"/>
    <property type="match status" value="1"/>
</dbReference>
<dbReference type="SUPFAM" id="SSF63411">
    <property type="entry name" value="LuxS/MPP-like metallohydrolase"/>
    <property type="match status" value="2"/>
</dbReference>
<dbReference type="PROSITE" id="PS00143">
    <property type="entry name" value="INSULINASE"/>
    <property type="match status" value="1"/>
</dbReference>
<proteinExistence type="inferred from homology"/>
<name>Y855_MYCLE</name>
<sequence>MRRSKQGAEGKAEKKAARSAGVCRTTLPGGLRVVTEHLPAVRSASVGVWVGVGSRDEGATVAGAAHFLEHLLFKSTSTRTAMDIAQAIDAVGGELNAFTAKEHTCYYAHVLDSDLELAVDLVADVVLNGRCAVDDVELERDVVLEEIAMRDDDPEDALGDMFLAALFGDHPVGRPVIGTMESVSAMTRTQLHSFHVRRYTPERMVVAVAGNVDHDEMVALVREHFGSRLIRGRQSAPPRKSTGRINGGPALTLGKRDAEQTHVLLGVRTPGRSWEHRWALSVLHTALGGGLSSRLFQEIRETRGLAYSVYSALDIFADSGALSVYAACLPGRFADVMQVISEVLASVAGDGITEAECRIAKGSLRGGIILGLEDSNSWMSRLGRSELNYGKYRGIEHTLQQIDEVTVEQVNALAHQLLNKRYGAAVLGPYASKKTLPRQLRIMVN</sequence>
<organism>
    <name type="scientific">Mycobacterium leprae (strain TN)</name>
    <dbReference type="NCBI Taxonomy" id="272631"/>
    <lineage>
        <taxon>Bacteria</taxon>
        <taxon>Bacillati</taxon>
        <taxon>Actinomycetota</taxon>
        <taxon>Actinomycetes</taxon>
        <taxon>Mycobacteriales</taxon>
        <taxon>Mycobacteriaceae</taxon>
        <taxon>Mycobacterium</taxon>
    </lineage>
</organism>